<protein>
    <recommendedName>
        <fullName evidence="1">Translation initiation factor IF-1</fullName>
    </recommendedName>
</protein>
<comment type="function">
    <text evidence="1">One of the essential components for the initiation of protein synthesis. Stabilizes the binding of IF-2 and IF-3 on the 30S subunit to which N-formylmethionyl-tRNA(fMet) subsequently binds. Helps modulate mRNA selection, yielding the 30S pre-initiation complex (PIC). Upon addition of the 50S ribosomal subunit IF-1, IF-2 and IF-3 are released leaving the mature 70S translation initiation complex.</text>
</comment>
<comment type="subunit">
    <text evidence="1">Component of the 30S ribosomal translation pre-initiation complex which assembles on the 30S ribosome in the order IF-2 and IF-3, IF-1 and N-formylmethionyl-tRNA(fMet); mRNA recruitment can occur at any time during PIC assembly.</text>
</comment>
<comment type="subcellular location">
    <subcellularLocation>
        <location evidence="1">Cytoplasm</location>
    </subcellularLocation>
</comment>
<comment type="similarity">
    <text evidence="1">Belongs to the IF-1 family.</text>
</comment>
<sequence>MAKKDGAIEVEGRVVEPLPNAMFRIELENGHKVLAHISGKMRQHYIRILPEDRVVVELSPYDLSRGRIVYRYK</sequence>
<name>IF1_MYCTA</name>
<dbReference type="EMBL" id="CP000611">
    <property type="protein sequence ID" value="ABQ75288.1"/>
    <property type="molecule type" value="Genomic_DNA"/>
</dbReference>
<dbReference type="RefSeq" id="WP_003418601.1">
    <property type="nucleotide sequence ID" value="NZ_CP016972.1"/>
</dbReference>
<dbReference type="SMR" id="A5U8D8"/>
<dbReference type="GeneID" id="98799387"/>
<dbReference type="KEGG" id="mra:MRA_3503"/>
<dbReference type="eggNOG" id="COG0361">
    <property type="taxonomic scope" value="Bacteria"/>
</dbReference>
<dbReference type="HOGENOM" id="CLU_151267_1_0_11"/>
<dbReference type="Proteomes" id="UP000001988">
    <property type="component" value="Chromosome"/>
</dbReference>
<dbReference type="GO" id="GO:0005829">
    <property type="term" value="C:cytosol"/>
    <property type="evidence" value="ECO:0007669"/>
    <property type="project" value="TreeGrafter"/>
</dbReference>
<dbReference type="GO" id="GO:0043022">
    <property type="term" value="F:ribosome binding"/>
    <property type="evidence" value="ECO:0007669"/>
    <property type="project" value="UniProtKB-UniRule"/>
</dbReference>
<dbReference type="GO" id="GO:0019843">
    <property type="term" value="F:rRNA binding"/>
    <property type="evidence" value="ECO:0007669"/>
    <property type="project" value="UniProtKB-UniRule"/>
</dbReference>
<dbReference type="GO" id="GO:0003743">
    <property type="term" value="F:translation initiation factor activity"/>
    <property type="evidence" value="ECO:0007669"/>
    <property type="project" value="UniProtKB-UniRule"/>
</dbReference>
<dbReference type="CDD" id="cd04451">
    <property type="entry name" value="S1_IF1"/>
    <property type="match status" value="1"/>
</dbReference>
<dbReference type="FunFam" id="2.40.50.140:FF:000002">
    <property type="entry name" value="Translation initiation factor IF-1"/>
    <property type="match status" value="1"/>
</dbReference>
<dbReference type="Gene3D" id="2.40.50.140">
    <property type="entry name" value="Nucleic acid-binding proteins"/>
    <property type="match status" value="1"/>
</dbReference>
<dbReference type="HAMAP" id="MF_00075">
    <property type="entry name" value="IF_1"/>
    <property type="match status" value="1"/>
</dbReference>
<dbReference type="InterPro" id="IPR012340">
    <property type="entry name" value="NA-bd_OB-fold"/>
</dbReference>
<dbReference type="InterPro" id="IPR006196">
    <property type="entry name" value="RNA-binding_domain_S1_IF1"/>
</dbReference>
<dbReference type="InterPro" id="IPR004368">
    <property type="entry name" value="TIF_IF1"/>
</dbReference>
<dbReference type="NCBIfam" id="TIGR00008">
    <property type="entry name" value="infA"/>
    <property type="match status" value="1"/>
</dbReference>
<dbReference type="PANTHER" id="PTHR33370">
    <property type="entry name" value="TRANSLATION INITIATION FACTOR IF-1, CHLOROPLASTIC"/>
    <property type="match status" value="1"/>
</dbReference>
<dbReference type="PANTHER" id="PTHR33370:SF1">
    <property type="entry name" value="TRANSLATION INITIATION FACTOR IF-1, CHLOROPLASTIC"/>
    <property type="match status" value="1"/>
</dbReference>
<dbReference type="Pfam" id="PF01176">
    <property type="entry name" value="eIF-1a"/>
    <property type="match status" value="1"/>
</dbReference>
<dbReference type="SUPFAM" id="SSF50249">
    <property type="entry name" value="Nucleic acid-binding proteins"/>
    <property type="match status" value="1"/>
</dbReference>
<dbReference type="PROSITE" id="PS50832">
    <property type="entry name" value="S1_IF1_TYPE"/>
    <property type="match status" value="1"/>
</dbReference>
<proteinExistence type="inferred from homology"/>
<reference key="1">
    <citation type="journal article" date="2008" name="PLoS ONE">
        <title>Genetic basis of virulence attenuation revealed by comparative genomic analysis of Mycobacterium tuberculosis strain H37Ra versus H37Rv.</title>
        <authorList>
            <person name="Zheng H."/>
            <person name="Lu L."/>
            <person name="Wang B."/>
            <person name="Pu S."/>
            <person name="Zhang X."/>
            <person name="Zhu G."/>
            <person name="Shi W."/>
            <person name="Zhang L."/>
            <person name="Wang H."/>
            <person name="Wang S."/>
            <person name="Zhao G."/>
            <person name="Zhang Y."/>
        </authorList>
    </citation>
    <scope>NUCLEOTIDE SEQUENCE [LARGE SCALE GENOMIC DNA]</scope>
    <source>
        <strain>ATCC 25177 / H37Ra</strain>
    </source>
</reference>
<organism>
    <name type="scientific">Mycobacterium tuberculosis (strain ATCC 25177 / H37Ra)</name>
    <dbReference type="NCBI Taxonomy" id="419947"/>
    <lineage>
        <taxon>Bacteria</taxon>
        <taxon>Bacillati</taxon>
        <taxon>Actinomycetota</taxon>
        <taxon>Actinomycetes</taxon>
        <taxon>Mycobacteriales</taxon>
        <taxon>Mycobacteriaceae</taxon>
        <taxon>Mycobacterium</taxon>
        <taxon>Mycobacterium tuberculosis complex</taxon>
    </lineage>
</organism>
<accession>A5U8D8</accession>
<evidence type="ECO:0000255" key="1">
    <source>
        <dbReference type="HAMAP-Rule" id="MF_00075"/>
    </source>
</evidence>
<feature type="chain" id="PRO_0000338865" description="Translation initiation factor IF-1">
    <location>
        <begin position="1"/>
        <end position="73"/>
    </location>
</feature>
<feature type="domain" description="S1-like" evidence="1">
    <location>
        <begin position="1"/>
        <end position="73"/>
    </location>
</feature>
<keyword id="KW-0963">Cytoplasm</keyword>
<keyword id="KW-0396">Initiation factor</keyword>
<keyword id="KW-0648">Protein biosynthesis</keyword>
<keyword id="KW-1185">Reference proteome</keyword>
<keyword id="KW-0694">RNA-binding</keyword>
<keyword id="KW-0699">rRNA-binding</keyword>
<gene>
    <name evidence="1" type="primary">infA</name>
    <name type="ordered locus">MRA_3503</name>
</gene>